<sequence>VHSVVDYVSAAEHQVYPWGINDPTEGNRTTLHLPWLKTLSTDWHIDGKGWYSTTRGNNAIAQENPTGGPEYENNYRPKSPLFIFKYPYSKAMTPPSSYRDASITQLFYTTNVYHDVLYILGFNEKAGNFQINNWNKGGVGGDYAILNSQDGSGVNNANFATPPDGQPGRMRMYTWNASIPERDGCFEAGIVIHEYTHGVSNRLTGGPENSRCLAALESGGMGEGWSDFFATAIRLKPGDTRATDYTMGEWASNRPNGIRKYRYSTSLTTNPHMYVDADGLTSVHAIGNIWASMLYELLWNLIDKHGKGDVTKIRPVLKNGVPTDGRHLAMKIVLDGMALQPCLPNFVQARDAILDADKNLTQGSNKCEIWKAFAKRGLGVGAVFNLSKRTGS</sequence>
<dbReference type="EC" id="3.4.24.-"/>
<dbReference type="EMBL" id="DQ384955">
    <property type="protein sequence ID" value="ABL84993.1"/>
    <property type="molecule type" value="Genomic_DNA"/>
</dbReference>
<dbReference type="SMR" id="A1XIM5"/>
<dbReference type="MEROPS" id="M36.001"/>
<dbReference type="GlyCosmos" id="A1XIM5">
    <property type="glycosylation" value="3 sites, No reported glycans"/>
</dbReference>
<dbReference type="GO" id="GO:0005576">
    <property type="term" value="C:extracellular region"/>
    <property type="evidence" value="ECO:0007669"/>
    <property type="project" value="UniProtKB-SubCell"/>
</dbReference>
<dbReference type="GO" id="GO:0004222">
    <property type="term" value="F:metalloendopeptidase activity"/>
    <property type="evidence" value="ECO:0007669"/>
    <property type="project" value="InterPro"/>
</dbReference>
<dbReference type="GO" id="GO:0008270">
    <property type="term" value="F:zinc ion binding"/>
    <property type="evidence" value="ECO:0007669"/>
    <property type="project" value="InterPro"/>
</dbReference>
<dbReference type="GO" id="GO:0006508">
    <property type="term" value="P:proteolysis"/>
    <property type="evidence" value="ECO:0007669"/>
    <property type="project" value="UniProtKB-KW"/>
</dbReference>
<dbReference type="CDD" id="cd09596">
    <property type="entry name" value="M36"/>
    <property type="match status" value="1"/>
</dbReference>
<dbReference type="Gene3D" id="3.10.170.10">
    <property type="match status" value="1"/>
</dbReference>
<dbReference type="Gene3D" id="1.10.390.10">
    <property type="entry name" value="Neutral Protease Domain 2"/>
    <property type="match status" value="1"/>
</dbReference>
<dbReference type="InterPro" id="IPR050371">
    <property type="entry name" value="Fungal_virulence_M36"/>
</dbReference>
<dbReference type="InterPro" id="IPR001842">
    <property type="entry name" value="Peptidase_M36"/>
</dbReference>
<dbReference type="InterPro" id="IPR027268">
    <property type="entry name" value="Peptidase_M4/M1_CTD_sf"/>
</dbReference>
<dbReference type="PANTHER" id="PTHR33478">
    <property type="entry name" value="EXTRACELLULAR METALLOPROTEINASE MEP"/>
    <property type="match status" value="1"/>
</dbReference>
<dbReference type="PANTHER" id="PTHR33478:SF1">
    <property type="entry name" value="EXTRACELLULAR METALLOPROTEINASE MEP"/>
    <property type="match status" value="1"/>
</dbReference>
<dbReference type="Pfam" id="PF02128">
    <property type="entry name" value="Peptidase_M36"/>
    <property type="match status" value="1"/>
</dbReference>
<dbReference type="PRINTS" id="PR00999">
    <property type="entry name" value="FUNGALYSIN"/>
</dbReference>
<dbReference type="SUPFAM" id="SSF55486">
    <property type="entry name" value="Metalloproteases ('zincins'), catalytic domain"/>
    <property type="match status" value="1"/>
</dbReference>
<dbReference type="PROSITE" id="PS00142">
    <property type="entry name" value="ZINC_PROTEASE"/>
    <property type="match status" value="1"/>
</dbReference>
<comment type="function">
    <text evidence="1">Secreted metalloproteinase probably acting as a virulence factor.</text>
</comment>
<comment type="cofactor">
    <cofactor evidence="1">
        <name>Zn(2+)</name>
        <dbReference type="ChEBI" id="CHEBI:29105"/>
    </cofactor>
    <text evidence="1">Binds 1 zinc ion per subunit.</text>
</comment>
<comment type="subcellular location">
    <subcellularLocation>
        <location evidence="4">Secreted</location>
    </subcellularLocation>
</comment>
<comment type="similarity">
    <text evidence="5">Belongs to the peptidase M36 family.</text>
</comment>
<protein>
    <recommendedName>
        <fullName>Extracellular metalloproteinase 4</fullName>
        <ecNumber>3.4.24.-</ecNumber>
    </recommendedName>
    <alternativeName>
        <fullName>Fungalysin MEP4</fullName>
    </alternativeName>
</protein>
<keyword id="KW-0325">Glycoprotein</keyword>
<keyword id="KW-0378">Hydrolase</keyword>
<keyword id="KW-0479">Metal-binding</keyword>
<keyword id="KW-0482">Metalloprotease</keyword>
<keyword id="KW-0645">Protease</keyword>
<keyword id="KW-0964">Secreted</keyword>
<keyword id="KW-0843">Virulence</keyword>
<keyword id="KW-0862">Zinc</keyword>
<keyword id="KW-0865">Zymogen</keyword>
<reference key="1">
    <citation type="journal article" date="2007" name="FEMS Microbiol. Lett.">
        <title>Closely related dermatophyte species produce different patterns of secreted proteins.</title>
        <authorList>
            <person name="Giddey K."/>
            <person name="Favre B."/>
            <person name="Quadroni M."/>
            <person name="Monod M."/>
        </authorList>
    </citation>
    <scope>NUCLEOTIDE SEQUENCE [GENOMIC DNA]</scope>
    <scope>IDENTIFICATION BY MASS SPECTROMETRY</scope>
    <scope>SUBCELLULAR LOCATION</scope>
    <source>
        <strain>LAU 209</strain>
    </source>
</reference>
<organism>
    <name type="scientific">Trichophyton soudanense</name>
    <dbReference type="NCBI Taxonomy" id="69891"/>
    <lineage>
        <taxon>Eukaryota</taxon>
        <taxon>Fungi</taxon>
        <taxon>Dikarya</taxon>
        <taxon>Ascomycota</taxon>
        <taxon>Pezizomycotina</taxon>
        <taxon>Eurotiomycetes</taxon>
        <taxon>Eurotiomycetidae</taxon>
        <taxon>Onygenales</taxon>
        <taxon>Arthrodermataceae</taxon>
        <taxon>Trichophyton</taxon>
    </lineage>
</organism>
<proteinExistence type="evidence at protein level"/>
<evidence type="ECO:0000250" key="1"/>
<evidence type="ECO:0000255" key="2"/>
<evidence type="ECO:0000255" key="3">
    <source>
        <dbReference type="PROSITE-ProRule" id="PRU10095"/>
    </source>
</evidence>
<evidence type="ECO:0000269" key="4">
    <source>
    </source>
</evidence>
<evidence type="ECO:0000305" key="5"/>
<accession>A1XIM5</accession>
<gene>
    <name type="primary">MEP4</name>
</gene>
<name>MEP4_TRISD</name>
<feature type="propeptide" id="PRO_0000380868" evidence="1">
    <location>
        <begin position="1" status="less than"/>
        <end position="9"/>
    </location>
</feature>
<feature type="chain" id="PRO_0000380869" description="Extracellular metalloproteinase 4">
    <location>
        <begin position="10"/>
        <end position="392" status="greater than"/>
    </location>
</feature>
<feature type="active site" evidence="3">
    <location>
        <position position="194"/>
    </location>
</feature>
<feature type="binding site" evidence="3">
    <location>
        <position position="193"/>
    </location>
    <ligand>
        <name>Zn(2+)</name>
        <dbReference type="ChEBI" id="CHEBI:29105"/>
        <note>catalytic</note>
    </ligand>
</feature>
<feature type="binding site" evidence="3">
    <location>
        <position position="197"/>
    </location>
    <ligand>
        <name>Zn(2+)</name>
        <dbReference type="ChEBI" id="CHEBI:29105"/>
        <note>catalytic</note>
    </ligand>
</feature>
<feature type="glycosylation site" description="N-linked (GlcNAc...) asparagine" evidence="2">
    <location>
        <position position="176"/>
    </location>
</feature>
<feature type="glycosylation site" description="N-linked (GlcNAc...) asparagine" evidence="2">
    <location>
        <position position="359"/>
    </location>
</feature>
<feature type="glycosylation site" description="N-linked (GlcNAc...) asparagine" evidence="2">
    <location>
        <position position="385"/>
    </location>
</feature>
<feature type="non-terminal residue">
    <location>
        <position position="1"/>
    </location>
</feature>
<feature type="non-terminal residue">
    <location>
        <position position="392"/>
    </location>
</feature>